<keyword id="KW-0539">Nucleus</keyword>
<keyword id="KW-1185">Reference proteome</keyword>
<feature type="chain" id="PRO_0000454641" description="Unhealthy ribosome biogenesis protein 2 homolog">
    <location>
        <begin position="1"/>
        <end position="1495"/>
    </location>
</feature>
<proteinExistence type="evidence at transcript level"/>
<name>URB2_DANRE</name>
<dbReference type="EMBL" id="CR762497">
    <property type="status" value="NOT_ANNOTATED_CDS"/>
    <property type="molecule type" value="Genomic_DNA"/>
</dbReference>
<dbReference type="RefSeq" id="NP_001116773.2">
    <property type="nucleotide sequence ID" value="NM_001123301.2"/>
</dbReference>
<dbReference type="RefSeq" id="XP_005156935.1">
    <property type="nucleotide sequence ID" value="XM_005156878.5"/>
</dbReference>
<dbReference type="FunCoup" id="B0V0U5">
    <property type="interactions" value="1511"/>
</dbReference>
<dbReference type="STRING" id="7955.ENSDARP00000121235"/>
<dbReference type="PaxDb" id="7955-ENSDARP00000121235"/>
<dbReference type="PeptideAtlas" id="B0V0U5"/>
<dbReference type="Ensembl" id="ENSDART00000138747">
    <property type="protein sequence ID" value="ENSDARP00000121235"/>
    <property type="gene ID" value="ENSDARG00000003217"/>
</dbReference>
<dbReference type="GeneID" id="570267"/>
<dbReference type="KEGG" id="dre:570267"/>
<dbReference type="AGR" id="ZFIN:ZDB-GENE-030131-2621"/>
<dbReference type="CTD" id="9816"/>
<dbReference type="ZFIN" id="ZDB-GENE-030131-2621">
    <property type="gene designation" value="urb2"/>
</dbReference>
<dbReference type="eggNOG" id="ENOG502QWBH">
    <property type="taxonomic scope" value="Eukaryota"/>
</dbReference>
<dbReference type="HOGENOM" id="CLU_251606_0_0_1"/>
<dbReference type="InParanoid" id="B0V0U5"/>
<dbReference type="OrthoDB" id="160374at2759"/>
<dbReference type="PhylomeDB" id="B0V0U5"/>
<dbReference type="TreeFam" id="TF328770"/>
<dbReference type="PRO" id="PR:B0V0U5"/>
<dbReference type="Proteomes" id="UP000000437">
    <property type="component" value="Chromosome 13"/>
</dbReference>
<dbReference type="Bgee" id="ENSDARG00000003217">
    <property type="expression patterns" value="Expressed in early embryo and 24 other cell types or tissues"/>
</dbReference>
<dbReference type="ExpressionAtlas" id="B0V0U5">
    <property type="expression patterns" value="baseline and differential"/>
</dbReference>
<dbReference type="GO" id="GO:0005730">
    <property type="term" value="C:nucleolus"/>
    <property type="evidence" value="ECO:0000318"/>
    <property type="project" value="GO_Central"/>
</dbReference>
<dbReference type="GO" id="GO:1902036">
    <property type="term" value="P:regulation of hematopoietic stem cell differentiation"/>
    <property type="evidence" value="ECO:0000315"/>
    <property type="project" value="ZFIN"/>
</dbReference>
<dbReference type="GO" id="GO:1901796">
    <property type="term" value="P:regulation of signal transduction by p53 class mediator"/>
    <property type="evidence" value="ECO:0000315"/>
    <property type="project" value="UniProtKB"/>
</dbReference>
<dbReference type="GO" id="GO:0042254">
    <property type="term" value="P:ribosome biogenesis"/>
    <property type="evidence" value="ECO:0000318"/>
    <property type="project" value="GO_Central"/>
</dbReference>
<dbReference type="InterPro" id="IPR052609">
    <property type="entry name" value="Ribosome_Biogenesis_Reg"/>
</dbReference>
<dbReference type="InterPro" id="IPR018849">
    <property type="entry name" value="Urb2/Npa2_C"/>
</dbReference>
<dbReference type="PANTHER" id="PTHR15682">
    <property type="entry name" value="UNHEALTHY RIBOSOME BIOGENESIS PROTEIN 2 HOMOLOG"/>
    <property type="match status" value="1"/>
</dbReference>
<dbReference type="PANTHER" id="PTHR15682:SF2">
    <property type="entry name" value="UNHEALTHY RIBOSOME BIOGENESIS PROTEIN 2 HOMOLOG"/>
    <property type="match status" value="1"/>
</dbReference>
<dbReference type="Pfam" id="PF10441">
    <property type="entry name" value="Urb2"/>
    <property type="match status" value="1"/>
</dbReference>
<accession>B0V0U5</accession>
<reference key="1">
    <citation type="journal article" date="2013" name="Nature">
        <title>The zebrafish reference genome sequence and its relationship to the human genome.</title>
        <authorList>
            <person name="Howe K."/>
            <person name="Clark M.D."/>
            <person name="Torroja C.F."/>
            <person name="Torrance J."/>
            <person name="Berthelot C."/>
            <person name="Muffato M."/>
            <person name="Collins J.E."/>
            <person name="Humphray S."/>
            <person name="McLaren K."/>
            <person name="Matthews L."/>
            <person name="McLaren S."/>
            <person name="Sealy I."/>
            <person name="Caccamo M."/>
            <person name="Churcher C."/>
            <person name="Scott C."/>
            <person name="Barrett J.C."/>
            <person name="Koch R."/>
            <person name="Rauch G.J."/>
            <person name="White S."/>
            <person name="Chow W."/>
            <person name="Kilian B."/>
            <person name="Quintais L.T."/>
            <person name="Guerra-Assuncao J.A."/>
            <person name="Zhou Y."/>
            <person name="Gu Y."/>
            <person name="Yen J."/>
            <person name="Vogel J.H."/>
            <person name="Eyre T."/>
            <person name="Redmond S."/>
            <person name="Banerjee R."/>
            <person name="Chi J."/>
            <person name="Fu B."/>
            <person name="Langley E."/>
            <person name="Maguire S.F."/>
            <person name="Laird G.K."/>
            <person name="Lloyd D."/>
            <person name="Kenyon E."/>
            <person name="Donaldson S."/>
            <person name="Sehra H."/>
            <person name="Almeida-King J."/>
            <person name="Loveland J."/>
            <person name="Trevanion S."/>
            <person name="Jones M."/>
            <person name="Quail M."/>
            <person name="Willey D."/>
            <person name="Hunt A."/>
            <person name="Burton J."/>
            <person name="Sims S."/>
            <person name="McLay K."/>
            <person name="Plumb B."/>
            <person name="Davis J."/>
            <person name="Clee C."/>
            <person name="Oliver K."/>
            <person name="Clark R."/>
            <person name="Riddle C."/>
            <person name="Elliot D."/>
            <person name="Threadgold G."/>
            <person name="Harden G."/>
            <person name="Ware D."/>
            <person name="Begum S."/>
            <person name="Mortimore B."/>
            <person name="Kerry G."/>
            <person name="Heath P."/>
            <person name="Phillimore B."/>
            <person name="Tracey A."/>
            <person name="Corby N."/>
            <person name="Dunn M."/>
            <person name="Johnson C."/>
            <person name="Wood J."/>
            <person name="Clark S."/>
            <person name="Pelan S."/>
            <person name="Griffiths G."/>
            <person name="Smith M."/>
            <person name="Glithero R."/>
            <person name="Howden P."/>
            <person name="Barker N."/>
            <person name="Lloyd C."/>
            <person name="Stevens C."/>
            <person name="Harley J."/>
            <person name="Holt K."/>
            <person name="Panagiotidis G."/>
            <person name="Lovell J."/>
            <person name="Beasley H."/>
            <person name="Henderson C."/>
            <person name="Gordon D."/>
            <person name="Auger K."/>
            <person name="Wright D."/>
            <person name="Collins J."/>
            <person name="Raisen C."/>
            <person name="Dyer L."/>
            <person name="Leung K."/>
            <person name="Robertson L."/>
            <person name="Ambridge K."/>
            <person name="Leongamornlert D."/>
            <person name="McGuire S."/>
            <person name="Gilderthorp R."/>
            <person name="Griffiths C."/>
            <person name="Manthravadi D."/>
            <person name="Nichol S."/>
            <person name="Barker G."/>
            <person name="Whitehead S."/>
            <person name="Kay M."/>
            <person name="Brown J."/>
            <person name="Murnane C."/>
            <person name="Gray E."/>
            <person name="Humphries M."/>
            <person name="Sycamore N."/>
            <person name="Barker D."/>
            <person name="Saunders D."/>
            <person name="Wallis J."/>
            <person name="Babbage A."/>
            <person name="Hammond S."/>
            <person name="Mashreghi-Mohammadi M."/>
            <person name="Barr L."/>
            <person name="Martin S."/>
            <person name="Wray P."/>
            <person name="Ellington A."/>
            <person name="Matthews N."/>
            <person name="Ellwood M."/>
            <person name="Woodmansey R."/>
            <person name="Clark G."/>
            <person name="Cooper J."/>
            <person name="Tromans A."/>
            <person name="Grafham D."/>
            <person name="Skuce C."/>
            <person name="Pandian R."/>
            <person name="Andrews R."/>
            <person name="Harrison E."/>
            <person name="Kimberley A."/>
            <person name="Garnett J."/>
            <person name="Fosker N."/>
            <person name="Hall R."/>
            <person name="Garner P."/>
            <person name="Kelly D."/>
            <person name="Bird C."/>
            <person name="Palmer S."/>
            <person name="Gehring I."/>
            <person name="Berger A."/>
            <person name="Dooley C.M."/>
            <person name="Ersan-Urun Z."/>
            <person name="Eser C."/>
            <person name="Geiger H."/>
            <person name="Geisler M."/>
            <person name="Karotki L."/>
            <person name="Kirn A."/>
            <person name="Konantz J."/>
            <person name="Konantz M."/>
            <person name="Oberlander M."/>
            <person name="Rudolph-Geiger S."/>
            <person name="Teucke M."/>
            <person name="Lanz C."/>
            <person name="Raddatz G."/>
            <person name="Osoegawa K."/>
            <person name="Zhu B."/>
            <person name="Rapp A."/>
            <person name="Widaa S."/>
            <person name="Langford C."/>
            <person name="Yang F."/>
            <person name="Schuster S.C."/>
            <person name="Carter N.P."/>
            <person name="Harrow J."/>
            <person name="Ning Z."/>
            <person name="Herrero J."/>
            <person name="Searle S.M."/>
            <person name="Enright A."/>
            <person name="Geisler R."/>
            <person name="Plasterk R.H."/>
            <person name="Lee C."/>
            <person name="Westerfield M."/>
            <person name="de Jong P.J."/>
            <person name="Zon L.I."/>
            <person name="Postlethwait J.H."/>
            <person name="Nusslein-Volhard C."/>
            <person name="Hubbard T.J."/>
            <person name="Roest Crollius H."/>
            <person name="Rogers J."/>
            <person name="Stemple D.L."/>
        </authorList>
    </citation>
    <scope>NUCLEOTIDE SEQUENCE [LARGE SCALE GENOMIC DNA]</scope>
    <source>
        <strain>Tuebingen</strain>
    </source>
</reference>
<reference key="2">
    <citation type="journal article" date="2018" name="Biochem. Biophys. Res. Commun.">
        <title>Ribosome biogenesis protein Urb2 regulates hematopoietic stem cells development via P53 pathway in zebrafish.</title>
        <authorList>
            <person name="Cai P."/>
            <person name="Mao X."/>
            <person name="Zhao J."/>
            <person name="Luo L."/>
        </authorList>
    </citation>
    <scope>FUNCTION</scope>
    <scope>DISRUPTION PHENOTYPE</scope>
</reference>
<organism>
    <name type="scientific">Danio rerio</name>
    <name type="common">Zebrafish</name>
    <name type="synonym">Brachydanio rerio</name>
    <dbReference type="NCBI Taxonomy" id="7955"/>
    <lineage>
        <taxon>Eukaryota</taxon>
        <taxon>Metazoa</taxon>
        <taxon>Chordata</taxon>
        <taxon>Craniata</taxon>
        <taxon>Vertebrata</taxon>
        <taxon>Euteleostomi</taxon>
        <taxon>Actinopterygii</taxon>
        <taxon>Neopterygii</taxon>
        <taxon>Teleostei</taxon>
        <taxon>Ostariophysi</taxon>
        <taxon>Cypriniformes</taxon>
        <taxon>Danionidae</taxon>
        <taxon>Danioninae</taxon>
        <taxon>Danio</taxon>
    </lineage>
</organism>
<evidence type="ECO:0000250" key="1">
    <source>
        <dbReference type="UniProtKB" id="Q14146"/>
    </source>
</evidence>
<evidence type="ECO:0000269" key="2">
    <source>
    </source>
</evidence>
<comment type="function">
    <text evidence="2">Essential for hematopietic stem cell development through the regulation of p53/TP53 pathway.</text>
</comment>
<comment type="subcellular location">
    <subcellularLocation>
        <location evidence="1">Nucleus</location>
        <location evidence="1">Nucleolus</location>
    </subcellularLocation>
</comment>
<comment type="developmental stage">
    <text evidence="2">Expression in caudal hematopoietic tissue initiates during hematopietic stem cell expansion stages, and the expression level from 72 hours post-fertilization (hpf) to 96 hpf is much higher than that at 48 hpf.</text>
</comment>
<comment type="disruption phenotype">
    <text evidence="2">Mutants show a notable decrease in the population of hematopietic stem cells in caudal hematopoietic tissue and early T-cells in thymus (PubMed:29470984). Compromised cell proliferation and excessive apoptosis are observed in the caudal hematopoietic tissue (PubMed:29470984).</text>
</comment>
<gene>
    <name type="primary">urb2</name>
</gene>
<protein>
    <recommendedName>
        <fullName>Unhealthy ribosome biogenesis protein 2 homolog</fullName>
    </recommendedName>
</protein>
<sequence>MAAIYSGIQLKLKNTRTPWPDKLKLARFAWISTQCLLPNKEQVLFDWTNHALTCFYNKKVEMPPEVVEGLWTYLDDILHSRKLHNVLSQGKTISLRLTVAQIINDRILDYTSGLRSVSFHTILSCCHGILTSPVLSVIYTAKYELLVQLLSRLCGLTSMQLRQQKYEEPLSLKAFEVLLVVLSNYLTVQKQQANSNRVFFQVTAHLLHPLLLLRHLLNTRVWTEKDDVKIRQNLSKEIRTKVDAVLQSALFLSDHLQSYKVEVSPSENEAGDRKSHIGKGLQGPLNTILTRICIHGASEEEEALFYAVKSNSLSLLFKFALDSFCRGGENKRVIFHLMAKLITALGFTDELDIDENFRASNWGICLLALENLLNSCLVGDIYNVAADRIQHGEVQFNFYRKVARLLFNNTQMGVPAWYRCLRALLALNHQILEPDLDELLSAVWVDAENMELRVRKAREALVSAVLQTYSKLRQLPKLIEELLDVVCRPAADELRPALLPEAIQKTLSQCLLDNPLRQNLEICGLILKRVQSCLLPHIQDETSDLALKVFSMSLLLHAVLFSFKTLDNSTPVPVVKQTLSLMTEMLKVVEDLLEQKLATKGPWMEKVQEVTLLLAHTWVEADALFQIHCTKYTSPSASQSSTLVDKALMLRNMDSPLGKLLQNLLALHKLKIHLLKSFSESSEMQKMAQFILNREELSVIHSLDQMWDFQFCNVNSSTYNAAHWFLVTSNLPLIAPYLDPNDRSVFAECMLKSLLQSLDASGSNLENTGISVCLISRQLLESPVLCELPEIFSALTKCIIKALFGLLDSSHMQLICPSFLTPPVENVEVKDEEMGMTPSMKRLKAIGLEMLYSVKMKSSVPLSKRQINGLLQLVKVTSVLNGYAMSYEDYLELFLTLLTLTSTIQCVEETNLSAFIELLKELFSVMASLLLAKNSQSILKVIHGSNLLEATMTTLFSRSSEGLFKSLDGPTWLSFLQSVQDFIQSLIRLIIDRKSSICLNLEKFTSFMVECNFTARVLTVDTGDLFSLQLHLVTLSALCREMMTTLGKNKQLDQALTHLLEKATAVMEPAIQAVLMGKGSCLLRQSFSVEVVTVMIRCELARASSSNDDGQEKISSMPFYRSFYQQILKELFPSPRPMDFLISSIHYLSAFHMAAEKTKVADLEDLHIEILQSIQALLSGTWMSLTDVKELEGPVKELLNQLMSNCSQEQFHLFLLMLREGLVAAKVEGGQCSEVLSAVTLIKLLACCLFPEHCSKAFWLITPQIISSLIFIIKESSKLPSLTRVLTVPGLEALTVLLRQGKAQISNPHQVIVVLGALQFVPLDSHCMEDYHSAFEAVHEALFAIIHCYPQVMLKASPTFLNCFYRLVSSVMHEGKQRSDTDRASEKDRESLLKCARLVERMYTHVASAAEDFTVLSSFMVAQYVSELQRVTLQPEIKAHLTEGIYCILDHCVEQDIKFLNTTLQMGVKEVFNELYSSYTHYHKSQRQGEEKYTV</sequence>